<reference key="1">
    <citation type="journal article" date="2008" name="Genome Res.">
        <title>Comparative genome analysis of Salmonella enteritidis PT4 and Salmonella gallinarum 287/91 provides insights into evolutionary and host adaptation pathways.</title>
        <authorList>
            <person name="Thomson N.R."/>
            <person name="Clayton D.J."/>
            <person name="Windhorst D."/>
            <person name="Vernikos G."/>
            <person name="Davidson S."/>
            <person name="Churcher C."/>
            <person name="Quail M.A."/>
            <person name="Stevens M."/>
            <person name="Jones M.A."/>
            <person name="Watson M."/>
            <person name="Barron A."/>
            <person name="Layton A."/>
            <person name="Pickard D."/>
            <person name="Kingsley R.A."/>
            <person name="Bignell A."/>
            <person name="Clark L."/>
            <person name="Harris B."/>
            <person name="Ormond D."/>
            <person name="Abdellah Z."/>
            <person name="Brooks K."/>
            <person name="Cherevach I."/>
            <person name="Chillingworth T."/>
            <person name="Woodward J."/>
            <person name="Norberczak H."/>
            <person name="Lord A."/>
            <person name="Arrowsmith C."/>
            <person name="Jagels K."/>
            <person name="Moule S."/>
            <person name="Mungall K."/>
            <person name="Saunders M."/>
            <person name="Whitehead S."/>
            <person name="Chabalgoity J.A."/>
            <person name="Maskell D."/>
            <person name="Humphreys T."/>
            <person name="Roberts M."/>
            <person name="Barrow P.A."/>
            <person name="Dougan G."/>
            <person name="Parkhill J."/>
        </authorList>
    </citation>
    <scope>NUCLEOTIDE SEQUENCE [LARGE SCALE GENOMIC DNA]</scope>
    <source>
        <strain>287/91 / NCTC 13346</strain>
    </source>
</reference>
<protein>
    <recommendedName>
        <fullName evidence="1">Cell division protein ZapB</fullName>
    </recommendedName>
</protein>
<accession>B5RF83</accession>
<comment type="function">
    <text evidence="1">Non-essential, abundant cell division factor that is required for proper Z-ring formation. It is recruited early to the divisome by direct interaction with FtsZ, stimulating Z-ring assembly and thereby promoting cell division earlier in the cell cycle. Its recruitment to the Z-ring requires functional FtsA or ZipA.</text>
</comment>
<comment type="subunit">
    <text evidence="1">Homodimer. The ends of the coiled-coil dimer bind to each other, forming polymers. Interacts with FtsZ.</text>
</comment>
<comment type="subcellular location">
    <subcellularLocation>
        <location evidence="1">Cytoplasm</location>
    </subcellularLocation>
    <text evidence="1">Localizes to the septum at mid-cell, in a FtsZ-like pattern.</text>
</comment>
<comment type="similarity">
    <text evidence="1">Belongs to the ZapB family.</text>
</comment>
<keyword id="KW-0131">Cell cycle</keyword>
<keyword id="KW-0132">Cell division</keyword>
<keyword id="KW-0175">Coiled coil</keyword>
<keyword id="KW-0963">Cytoplasm</keyword>
<keyword id="KW-0717">Septation</keyword>
<organism>
    <name type="scientific">Salmonella gallinarum (strain 287/91 / NCTC 13346)</name>
    <dbReference type="NCBI Taxonomy" id="550538"/>
    <lineage>
        <taxon>Bacteria</taxon>
        <taxon>Pseudomonadati</taxon>
        <taxon>Pseudomonadota</taxon>
        <taxon>Gammaproteobacteria</taxon>
        <taxon>Enterobacterales</taxon>
        <taxon>Enterobacteriaceae</taxon>
        <taxon>Salmonella</taxon>
    </lineage>
</organism>
<proteinExistence type="inferred from homology"/>
<name>ZAPB_SALG2</name>
<gene>
    <name evidence="1" type="primary">zapB</name>
    <name type="ordered locus">SG3332</name>
</gene>
<dbReference type="EMBL" id="AM933173">
    <property type="protein sequence ID" value="CAR39126.1"/>
    <property type="molecule type" value="Genomic_DNA"/>
</dbReference>
<dbReference type="RefSeq" id="WP_000051370.1">
    <property type="nucleotide sequence ID" value="NC_011274.1"/>
</dbReference>
<dbReference type="SMR" id="B5RF83"/>
<dbReference type="KEGG" id="seg:SG3332"/>
<dbReference type="HOGENOM" id="CLU_171174_2_0_6"/>
<dbReference type="Proteomes" id="UP000008321">
    <property type="component" value="Chromosome"/>
</dbReference>
<dbReference type="GO" id="GO:0005737">
    <property type="term" value="C:cytoplasm"/>
    <property type="evidence" value="ECO:0007669"/>
    <property type="project" value="UniProtKB-SubCell"/>
</dbReference>
<dbReference type="GO" id="GO:0000917">
    <property type="term" value="P:division septum assembly"/>
    <property type="evidence" value="ECO:0007669"/>
    <property type="project" value="UniProtKB-KW"/>
</dbReference>
<dbReference type="GO" id="GO:0043093">
    <property type="term" value="P:FtsZ-dependent cytokinesis"/>
    <property type="evidence" value="ECO:0007669"/>
    <property type="project" value="UniProtKB-UniRule"/>
</dbReference>
<dbReference type="FunFam" id="1.20.5.340:FF:000014">
    <property type="entry name" value="Cell division protein ZapB"/>
    <property type="match status" value="1"/>
</dbReference>
<dbReference type="Gene3D" id="1.20.5.340">
    <property type="match status" value="1"/>
</dbReference>
<dbReference type="HAMAP" id="MF_01196">
    <property type="entry name" value="ZapB"/>
    <property type="match status" value="1"/>
</dbReference>
<dbReference type="InterPro" id="IPR009252">
    <property type="entry name" value="Cell_div_ZapB"/>
</dbReference>
<dbReference type="NCBIfam" id="NF011951">
    <property type="entry name" value="PRK15422.1"/>
    <property type="match status" value="1"/>
</dbReference>
<dbReference type="Pfam" id="PF06005">
    <property type="entry name" value="ZapB"/>
    <property type="match status" value="1"/>
</dbReference>
<evidence type="ECO:0000255" key="1">
    <source>
        <dbReference type="HAMAP-Rule" id="MF_01196"/>
    </source>
</evidence>
<evidence type="ECO:0000256" key="2">
    <source>
        <dbReference type="SAM" id="MobiDB-lite"/>
    </source>
</evidence>
<feature type="chain" id="PRO_1000138446" description="Cell division protein ZapB">
    <location>
        <begin position="1"/>
        <end position="79"/>
    </location>
</feature>
<feature type="region of interest" description="Disordered" evidence="2">
    <location>
        <begin position="36"/>
        <end position="63"/>
    </location>
</feature>
<feature type="coiled-coil region" evidence="1">
    <location>
        <begin position="3"/>
        <end position="79"/>
    </location>
</feature>
<feature type="compositionally biased region" description="Polar residues" evidence="2">
    <location>
        <begin position="36"/>
        <end position="45"/>
    </location>
</feature>
<feature type="compositionally biased region" description="Basic and acidic residues" evidence="2">
    <location>
        <begin position="46"/>
        <end position="57"/>
    </location>
</feature>
<sequence length="79" mass="9312">MSLEVFEKLEAKVQQAIDTITLLQMEIEELKEKNNSLTQEVQSAQHQREELERENNSLKEQQSGWQERLQALLGRMEEV</sequence>